<reference key="1">
    <citation type="submission" date="2006-10" db="EMBL/GenBank/DDBJ databases">
        <authorList>
            <person name="Fleischmann R.D."/>
            <person name="Dodson R.J."/>
            <person name="Haft D.H."/>
            <person name="Merkel J.S."/>
            <person name="Nelson W.C."/>
            <person name="Fraser C.M."/>
        </authorList>
    </citation>
    <scope>NUCLEOTIDE SEQUENCE [LARGE SCALE GENOMIC DNA]</scope>
    <source>
        <strain>ATCC 700084 / mc(2)155</strain>
    </source>
</reference>
<reference key="2">
    <citation type="journal article" date="2007" name="Genome Biol.">
        <title>Interrupted coding sequences in Mycobacterium smegmatis: authentic mutations or sequencing errors?</title>
        <authorList>
            <person name="Deshayes C."/>
            <person name="Perrodou E."/>
            <person name="Gallien S."/>
            <person name="Euphrasie D."/>
            <person name="Schaeffer C."/>
            <person name="Van-Dorsselaer A."/>
            <person name="Poch O."/>
            <person name="Lecompte O."/>
            <person name="Reyrat J.-M."/>
        </authorList>
    </citation>
    <scope>NUCLEOTIDE SEQUENCE [LARGE SCALE GENOMIC DNA]</scope>
    <source>
        <strain>ATCC 700084 / mc(2)155</strain>
    </source>
</reference>
<reference key="3">
    <citation type="journal article" date="2009" name="Genome Res.">
        <title>Ortho-proteogenomics: multiple proteomes investigation through orthology and a new MS-based protocol.</title>
        <authorList>
            <person name="Gallien S."/>
            <person name="Perrodou E."/>
            <person name="Carapito C."/>
            <person name="Deshayes C."/>
            <person name="Reyrat J.-M."/>
            <person name="Van Dorsselaer A."/>
            <person name="Poch O."/>
            <person name="Schaeffer C."/>
            <person name="Lecompte O."/>
        </authorList>
    </citation>
    <scope>NUCLEOTIDE SEQUENCE [LARGE SCALE GENOMIC DNA]</scope>
    <source>
        <strain>ATCC 700084 / mc(2)155</strain>
    </source>
</reference>
<reference key="4">
    <citation type="journal article" date="2003" name="J. Biol. Chem.">
        <title>Identification of the required acyltransferase step in the biosynthesis of the phosphatidylinositol mannosides of mycobacterium species.</title>
        <authorList>
            <person name="Kordulakova J."/>
            <person name="Gilleron M."/>
            <person name="Puzo G."/>
            <person name="Brennan P.J."/>
            <person name="Gicquel B."/>
            <person name="Mikusova K."/>
            <person name="Jackson M."/>
        </authorList>
    </citation>
    <scope>FUNCTION AS AN ACYLTRANSFERASE</scope>
    <scope>SUBSTRATE SPECIFICITY</scope>
    <scope>SUBCELLULAR LOCATION</scope>
    <scope>PATHWAY</scope>
    <scope>DISRUPTION PHENOTYPE</scope>
</reference>
<reference key="5">
    <citation type="journal article" date="2014" name="Protein Expr. Purif.">
        <title>Purification and characterization of the acyltransferase involved in biosynthesis of the major mycobacterial cell envelope glycolipid-- monoacylated phosphatidylinositol dimannoside.</title>
        <authorList>
            <person name="Svetlikova Z."/>
            <person name="Barath P."/>
            <person name="Jackson M."/>
            <person name="Kordulakova J."/>
            <person name="Mikusova K."/>
        </authorList>
    </citation>
    <scope>FUNCTION</scope>
    <scope>CATALYTIC ACTIVITY</scope>
</reference>
<reference evidence="9 10 11 12" key="6">
    <citation type="journal article" date="2016" name="Nat. Commun.">
        <title>Structural basis for selective recognition of acyl chains by the membrane-associated acyltransferase PatA.</title>
        <authorList>
            <person name="Albesa-Jove D."/>
            <person name="Svetlikova Z."/>
            <person name="Tersa M."/>
            <person name="Sancho-Vaello E."/>
            <person name="Carreras-Gonzalez A."/>
            <person name="Bonnet P."/>
            <person name="Arrasate P."/>
            <person name="Eguskiza A."/>
            <person name="Angala S.K."/>
            <person name="Cifuente J.O."/>
            <person name="Kordulakova J."/>
            <person name="Jackson M."/>
            <person name="Mikusova K."/>
            <person name="Guerin M.E."/>
        </authorList>
    </citation>
    <scope>X-RAY CRYSTALLOGRAPHY (2.06 ANGSTROMS) OF 13-304 IN COMPLEXES WITH PALMITATE AND PALMITOYL-COA ANALOG</scope>
    <scope>FUNCTION</scope>
    <scope>SUBUNIT</scope>
    <scope>SUBCELLULAR LOCATION</scope>
    <scope>ACTIVE SITE</scope>
    <scope>MUTAGENESIS OF HIS-126; ASP-131; GLU-149; ARG-164; PHE-182; LEU-197; GLU-200 AND HIS-284</scope>
</reference>
<reference evidence="13" key="7">
    <citation type="journal article" date="2018" name="ACS Chem. Biol.">
        <title>The molecular mechanism of substrate recognition and catalysis of the membrane acyltransferase PatA from Mycobacteria.</title>
        <authorList>
            <person name="Tersa M."/>
            <person name="Raich L."/>
            <person name="Albesa-Jove D."/>
            <person name="Trastoy B."/>
            <person name="Prandi J."/>
            <person name="Gilleron M."/>
            <person name="Rovira C."/>
            <person name="Guerin M.E."/>
        </authorList>
    </citation>
    <scope>X-RAY CRYSTALLOGRAPHY (2.41 ANGSTROMS) IN COMPLEX WITH PALMITATE; MANNOSE AND PALMITOYL-6-MANNOSE</scope>
    <scope>FUNCTION</scope>
    <scope>REACTION MECHANISM</scope>
    <scope>SUBCELLULAR LOCATION</scope>
    <scope>DOMAIN</scope>
    <scope>ACTIVE SITE</scope>
</reference>
<dbReference type="EC" id="2.3.1.265" evidence="2"/>
<dbReference type="EMBL" id="CP000480">
    <property type="protein sequence ID" value="ABK72658.1"/>
    <property type="molecule type" value="Genomic_DNA"/>
</dbReference>
<dbReference type="EMBL" id="CP001663">
    <property type="protein sequence ID" value="AFP39324.1"/>
    <property type="molecule type" value="Genomic_DNA"/>
</dbReference>
<dbReference type="RefSeq" id="WP_011728702.1">
    <property type="nucleotide sequence ID" value="NZ_SIJM01000002.1"/>
</dbReference>
<dbReference type="RefSeq" id="YP_887253.1">
    <property type="nucleotide sequence ID" value="NC_008596.1"/>
</dbReference>
<dbReference type="PDB" id="5F2T">
    <property type="method" value="X-ray"/>
    <property type="resolution" value="2.06 A"/>
    <property type="chains" value="A/B=13-304"/>
</dbReference>
<dbReference type="PDB" id="5F2Z">
    <property type="method" value="X-ray"/>
    <property type="resolution" value="2.90 A"/>
    <property type="chains" value="A/B/C/D=13-304"/>
</dbReference>
<dbReference type="PDB" id="5F31">
    <property type="method" value="X-ray"/>
    <property type="resolution" value="2.43 A"/>
    <property type="chains" value="A=13-304"/>
</dbReference>
<dbReference type="PDB" id="5F34">
    <property type="method" value="X-ray"/>
    <property type="resolution" value="3.28 A"/>
    <property type="chains" value="A/B/C/D=13-304"/>
</dbReference>
<dbReference type="PDB" id="5OCE">
    <property type="method" value="X-ray"/>
    <property type="resolution" value="2.41 A"/>
    <property type="chains" value="A/B/C/D=1-304"/>
</dbReference>
<dbReference type="PDB" id="7OJT">
    <property type="method" value="X-ray"/>
    <property type="resolution" value="3.67 A"/>
    <property type="chains" value="A/B/C/D=2-304"/>
</dbReference>
<dbReference type="PDBsum" id="5F2T"/>
<dbReference type="PDBsum" id="5F2Z"/>
<dbReference type="PDBsum" id="5F31"/>
<dbReference type="PDBsum" id="5F34"/>
<dbReference type="PDBsum" id="5OCE"/>
<dbReference type="PDBsum" id="7OJT"/>
<dbReference type="SMR" id="A0QWG5"/>
<dbReference type="STRING" id="246196.MSMEG_2934"/>
<dbReference type="PaxDb" id="246196-MSMEI_2860"/>
<dbReference type="KEGG" id="msb:LJ00_14600"/>
<dbReference type="KEGG" id="msg:MSMEI_2860"/>
<dbReference type="KEGG" id="msm:MSMEG_2934"/>
<dbReference type="PATRIC" id="fig|246196.19.peg.2897"/>
<dbReference type="eggNOG" id="COG1560">
    <property type="taxonomic scope" value="Bacteria"/>
</dbReference>
<dbReference type="OrthoDB" id="9803456at2"/>
<dbReference type="BRENDA" id="2.3.1.265">
    <property type="organism ID" value="3512"/>
</dbReference>
<dbReference type="UniPathway" id="UPA00949"/>
<dbReference type="EvolutionaryTrace" id="A0QWG5"/>
<dbReference type="Proteomes" id="UP000000757">
    <property type="component" value="Chromosome"/>
</dbReference>
<dbReference type="Proteomes" id="UP000006158">
    <property type="component" value="Chromosome"/>
</dbReference>
<dbReference type="GO" id="GO:0005886">
    <property type="term" value="C:plasma membrane"/>
    <property type="evidence" value="ECO:0007669"/>
    <property type="project" value="UniProtKB-SubCell"/>
</dbReference>
<dbReference type="GO" id="GO:0016746">
    <property type="term" value="F:acyltransferase activity"/>
    <property type="evidence" value="ECO:0000315"/>
    <property type="project" value="UniProtKB"/>
</dbReference>
<dbReference type="GO" id="GO:0009247">
    <property type="term" value="P:glycolipid biosynthetic process"/>
    <property type="evidence" value="ECO:0000315"/>
    <property type="project" value="UniProtKB"/>
</dbReference>
<dbReference type="GO" id="GO:0046488">
    <property type="term" value="P:phosphatidylinositol metabolic process"/>
    <property type="evidence" value="ECO:0007669"/>
    <property type="project" value="UniProtKB-UniPathway"/>
</dbReference>
<dbReference type="GO" id="GO:0008654">
    <property type="term" value="P:phospholipid biosynthetic process"/>
    <property type="evidence" value="ECO:0007669"/>
    <property type="project" value="UniProtKB-KW"/>
</dbReference>
<dbReference type="CDD" id="cd07984">
    <property type="entry name" value="LPLAT_LABLAT-like"/>
    <property type="match status" value="1"/>
</dbReference>
<dbReference type="InterPro" id="IPR004960">
    <property type="entry name" value="LipA_acyltrans"/>
</dbReference>
<dbReference type="NCBIfam" id="NF005919">
    <property type="entry name" value="PRK07920.1"/>
    <property type="match status" value="1"/>
</dbReference>
<dbReference type="PANTHER" id="PTHR30606">
    <property type="entry name" value="LIPID A BIOSYNTHESIS LAUROYL ACYLTRANSFERASE"/>
    <property type="match status" value="1"/>
</dbReference>
<dbReference type="PANTHER" id="PTHR30606:SF10">
    <property type="entry name" value="PHOSPHATIDYLINOSITOL MANNOSIDE ACYLTRANSFERASE"/>
    <property type="match status" value="1"/>
</dbReference>
<dbReference type="Pfam" id="PF03279">
    <property type="entry name" value="Lip_A_acyltrans"/>
    <property type="match status" value="1"/>
</dbReference>
<name>ACYLT_MYCS2</name>
<gene>
    <name evidence="5" type="primary">patA</name>
    <name type="ordered locus">MSMEG_2934</name>
    <name type="ordered locus">MSMEI_2860</name>
</gene>
<protein>
    <recommendedName>
        <fullName>Phosphatidylinositol mannoside acyltransferase</fullName>
        <shortName>PIM acyltransferase</shortName>
        <ecNumber evidence="2">2.3.1.265</ecNumber>
    </recommendedName>
</protein>
<evidence type="ECO:0000269" key="1">
    <source>
    </source>
</evidence>
<evidence type="ECO:0000269" key="2">
    <source>
    </source>
</evidence>
<evidence type="ECO:0000269" key="3">
    <source>
    </source>
</evidence>
<evidence type="ECO:0000269" key="4">
    <source>
    </source>
</evidence>
<evidence type="ECO:0000303" key="5">
    <source>
    </source>
</evidence>
<evidence type="ECO:0000305" key="6"/>
<evidence type="ECO:0000305" key="7">
    <source>
    </source>
</evidence>
<evidence type="ECO:0000305" key="8">
    <source>
    </source>
</evidence>
<evidence type="ECO:0007744" key="9">
    <source>
        <dbReference type="PDB" id="5F2T"/>
    </source>
</evidence>
<evidence type="ECO:0007744" key="10">
    <source>
        <dbReference type="PDB" id="5F2Z"/>
    </source>
</evidence>
<evidence type="ECO:0007744" key="11">
    <source>
        <dbReference type="PDB" id="5F31"/>
    </source>
</evidence>
<evidence type="ECO:0007744" key="12">
    <source>
        <dbReference type="PDB" id="5F34"/>
    </source>
</evidence>
<evidence type="ECO:0007744" key="13">
    <source>
        <dbReference type="PDB" id="5OCE"/>
    </source>
</evidence>
<evidence type="ECO:0007829" key="14">
    <source>
        <dbReference type="PDB" id="5F2T"/>
    </source>
</evidence>
<accession>A0QWG5</accession>
<accession>I7G9X8</accession>
<keyword id="KW-0002">3D-structure</keyword>
<keyword id="KW-0012">Acyltransferase</keyword>
<keyword id="KW-0997">Cell inner membrane</keyword>
<keyword id="KW-1003">Cell membrane</keyword>
<keyword id="KW-0444">Lipid biosynthesis</keyword>
<keyword id="KW-0443">Lipid metabolism</keyword>
<keyword id="KW-0472">Membrane</keyword>
<keyword id="KW-0594">Phospholipid biosynthesis</keyword>
<keyword id="KW-1208">Phospholipid metabolism</keyword>
<keyword id="KW-1185">Reference proteome</keyword>
<keyword id="KW-0808">Transferase</keyword>
<organism>
    <name type="scientific">Mycolicibacterium smegmatis (strain ATCC 700084 / mc(2)155)</name>
    <name type="common">Mycobacterium smegmatis</name>
    <dbReference type="NCBI Taxonomy" id="246196"/>
    <lineage>
        <taxon>Bacteria</taxon>
        <taxon>Bacillati</taxon>
        <taxon>Actinomycetota</taxon>
        <taxon>Actinomycetes</taxon>
        <taxon>Mycobacteriales</taxon>
        <taxon>Mycobacteriaceae</taxon>
        <taxon>Mycolicibacterium</taxon>
    </lineage>
</organism>
<sequence length="304" mass="33554">MTLSGRIPLGGQVTDLGYAAGWRLVRAMPEAMAQGVFGAGARYAARNGGPEQLRRNLARVVGKPPADVPDDLIRASLASYARYWREAFRLPAMDHGRLGEQLDVIDIDHLWSALDAGRGAVLALPHSGNWDMAGVWLVQNYGPFTTVAERLKPESLYRRFVEYRESLGFEVLPLTGGERPPFEVLAERLTDNRPICLMAERDLTRSGVQVDFFGEATRMPAGPAKLAIETGAALFPVHCWFEGDGWGMRVYPELDTSSGDVTAITQALADRFAANIATYPADWHMLQPQWIADLSDERRARLGT</sequence>
<proteinExistence type="evidence at protein level"/>
<feature type="chain" id="PRO_0000393726" description="Phosphatidylinositol mannoside acyltransferase">
    <location>
        <begin position="1"/>
        <end position="304"/>
    </location>
</feature>
<feature type="active site" description="Proton acceptor" evidence="7 8">
    <location>
        <position position="126"/>
    </location>
</feature>
<feature type="active site" evidence="7 8">
    <location>
        <position position="200"/>
    </location>
</feature>
<feature type="binding site" evidence="7">
    <location>
        <position position="126"/>
    </location>
    <ligand>
        <name>hexadecanoyl-CoA</name>
        <dbReference type="ChEBI" id="CHEBI:57379"/>
    </ligand>
</feature>
<feature type="binding site" evidence="7">
    <location>
        <position position="164"/>
    </location>
    <ligand>
        <name>hexadecanoyl-CoA</name>
        <dbReference type="ChEBI" id="CHEBI:57379"/>
    </ligand>
</feature>
<feature type="binding site" evidence="7">
    <location>
        <position position="206"/>
    </location>
    <ligand>
        <name>hexadecanoyl-CoA</name>
        <dbReference type="ChEBI" id="CHEBI:57379"/>
    </ligand>
</feature>
<feature type="binding site" evidence="7">
    <location>
        <position position="229"/>
    </location>
    <ligand>
        <name>hexadecanoyl-CoA</name>
        <dbReference type="ChEBI" id="CHEBI:57379"/>
    </ligand>
</feature>
<feature type="mutagenesis site" description="Loss of transferase activity." evidence="3">
    <original>H</original>
    <variation>A</variation>
    <location>
        <position position="126"/>
    </location>
</feature>
<feature type="mutagenesis site" description="65% decrease in transferase activity." evidence="3">
    <original>D</original>
    <variation>A</variation>
    <location>
        <position position="131"/>
    </location>
</feature>
<feature type="mutagenesis site" description="25% decrease in transferase activity." evidence="3">
    <original>E</original>
    <variation>A</variation>
    <location>
        <position position="149"/>
    </location>
</feature>
<feature type="mutagenesis site" description="20% decrease in transferase activity." evidence="3">
    <original>R</original>
    <variation>A</variation>
    <location>
        <position position="164"/>
    </location>
</feature>
<feature type="mutagenesis site" description="Loss of transferase activity; when associated with W-197." evidence="3">
    <original>F</original>
    <variation>W</variation>
    <location>
        <position position="182"/>
    </location>
</feature>
<feature type="mutagenesis site" description="Loss of transferase activity; when associated with W-182." evidence="3">
    <original>L</original>
    <variation>W</variation>
    <location>
        <position position="197"/>
    </location>
</feature>
<feature type="mutagenesis site" description="Loss of transferase activity." evidence="3">
    <original>E</original>
    <variation>A</variation>
    <location>
        <position position="200"/>
    </location>
</feature>
<feature type="mutagenesis site" description="50% decrease in transferase activity." evidence="3">
    <original>H</original>
    <variation>A</variation>
    <location>
        <position position="284"/>
    </location>
</feature>
<feature type="helix" evidence="14">
    <location>
        <begin position="42"/>
        <end position="45"/>
    </location>
</feature>
<feature type="helix" evidence="14">
    <location>
        <begin position="49"/>
        <end position="61"/>
    </location>
</feature>
<feature type="helix" evidence="14">
    <location>
        <begin position="65"/>
        <end position="67"/>
    </location>
</feature>
<feature type="helix" evidence="14">
    <location>
        <begin position="70"/>
        <end position="89"/>
    </location>
</feature>
<feature type="helix" evidence="14">
    <location>
        <begin position="90"/>
        <end position="92"/>
    </location>
</feature>
<feature type="helix" evidence="14">
    <location>
        <begin position="95"/>
        <end position="101"/>
    </location>
</feature>
<feature type="helix" evidence="14">
    <location>
        <begin position="108"/>
        <end position="115"/>
    </location>
</feature>
<feature type="strand" evidence="14">
    <location>
        <begin position="120"/>
        <end position="124"/>
    </location>
</feature>
<feature type="strand" evidence="14">
    <location>
        <begin position="126"/>
        <end position="128"/>
    </location>
</feature>
<feature type="helix" evidence="14">
    <location>
        <begin position="130"/>
        <end position="140"/>
    </location>
</feature>
<feature type="strand" evidence="14">
    <location>
        <begin position="145"/>
        <end position="148"/>
    </location>
</feature>
<feature type="helix" evidence="14">
    <location>
        <begin position="154"/>
        <end position="166"/>
    </location>
</feature>
<feature type="strand" evidence="14">
    <location>
        <begin position="170"/>
        <end position="179"/>
    </location>
</feature>
<feature type="helix" evidence="14">
    <location>
        <begin position="181"/>
        <end position="190"/>
    </location>
</feature>
<feature type="strand" evidence="14">
    <location>
        <begin position="194"/>
        <end position="198"/>
    </location>
</feature>
<feature type="strand" evidence="14">
    <location>
        <begin position="207"/>
        <end position="212"/>
    </location>
</feature>
<feature type="strand" evidence="14">
    <location>
        <begin position="215"/>
        <end position="219"/>
    </location>
</feature>
<feature type="helix" evidence="14">
    <location>
        <begin position="222"/>
        <end position="230"/>
    </location>
</feature>
<feature type="strand" evidence="14">
    <location>
        <begin position="233"/>
        <end position="242"/>
    </location>
</feature>
<feature type="strand" evidence="14">
    <location>
        <begin position="245"/>
        <end position="250"/>
    </location>
</feature>
<feature type="helix" evidence="14">
    <location>
        <begin position="261"/>
        <end position="278"/>
    </location>
</feature>
<feature type="helix" evidence="14">
    <location>
        <begin position="280"/>
        <end position="282"/>
    </location>
</feature>
<feature type="helix" evidence="14">
    <location>
        <begin position="291"/>
        <end position="293"/>
    </location>
</feature>
<feature type="helix" evidence="14">
    <location>
        <begin position="295"/>
        <end position="301"/>
    </location>
</feature>
<comment type="function">
    <text evidence="1 2 3 4">Catalyzes the transfer of a palmitoyl moiety from palmitoyl-CoA to the 6-position of the mannose ring linked to the 2-position of myo-inositol in phosphatidyl-myo-inositol monomannoside (PIM1) or dimannoside (PIM2).</text>
</comment>
<comment type="catalytic activity">
    <reaction evidence="2">
        <text>a 2,6-O-bis(alpha-D-mannopyranosyl)-1-phosphatidyl-1D-myo-inositol + an acyl-CoA = a 2-O-(alpha-D-mannosyl)-6-O-(6-O-acyl-alpha-D-mannosyl)-1-phosphatidyl-1D-myo-inositol + CoA</text>
        <dbReference type="Rhea" id="RHEA:52436"/>
        <dbReference type="ChEBI" id="CHEBI:57287"/>
        <dbReference type="ChEBI" id="CHEBI:58342"/>
        <dbReference type="ChEBI" id="CHEBI:136624"/>
        <dbReference type="ChEBI" id="CHEBI:136625"/>
        <dbReference type="EC" id="2.3.1.265"/>
    </reaction>
</comment>
<comment type="catalytic activity">
    <reaction evidence="2">
        <text>a 1,2-diacyl-sn-glycero-3-phospho-[alpha-D-mannopyranosyl-(1&lt;-&gt;6)-D-myo-inositol] + an acyl-CoA = a 1,2-diacyl-sn-glycero-3-phospho-[alpha-D-6-acyl-mannopyranosyl-(1&lt;-&gt;6)-D-myo-inositol] + CoA</text>
        <dbReference type="Rhea" id="RHEA:47412"/>
        <dbReference type="ChEBI" id="CHEBI:57287"/>
        <dbReference type="ChEBI" id="CHEBI:58342"/>
        <dbReference type="ChEBI" id="CHEBI:87673"/>
        <dbReference type="ChEBI" id="CHEBI:88053"/>
        <dbReference type="EC" id="2.3.1.265"/>
    </reaction>
</comment>
<comment type="pathway">
    <text evidence="1">Phospholipid metabolism; phosphatidylinositol metabolism.</text>
</comment>
<comment type="subunit">
    <text evidence="3">Monomer.</text>
</comment>
<comment type="subcellular location">
    <subcellularLocation>
        <location evidence="1 3 4">Cell inner membrane</location>
        <topology evidence="3 4">Peripheral membrane protein</topology>
        <orientation evidence="3 4">Cytoplasmic side</orientation>
    </subcellularLocation>
    <text evidence="8">Permanently associated with the membrane.</text>
</comment>
<comment type="domain">
    <text evidence="4">The acceptor mannose ring localizes in a cavity at the end of a surface-exposed long groove where the active site is located, whereas the palmitate moiety accommodates into a hydrophobic pocket deeply buried in the alpha/beta core of the protein.</text>
</comment>
<comment type="disruption phenotype">
    <text evidence="1">Mutant exhibits severe growth defects and contains an increased amount of phosphatidylinositol mono- and dimannosides and a decreased amount of acylated phosphatidylinositol dimannosides compared with the wild-type parental strain.</text>
</comment>
<comment type="similarity">
    <text evidence="6">Belongs to the LpxL/LpxM/LpxP family.</text>
</comment>